<comment type="function">
    <text>Muscle contraction. Myosin is a protein that binds to F-actin and has ATPase activity that is activated by F-actin.</text>
</comment>
<comment type="subunit">
    <text>Muscle myosin is a hexameric protein that consists of 2 heavy chain subunits (MHC), 2 alkali light chain subunits (MLC) and 2 regulatory light chain subunits (MLC-2).</text>
</comment>
<comment type="subcellular location">
    <subcellularLocation>
        <location>Cytoplasm</location>
        <location>Myofibril</location>
    </subcellularLocation>
    <text>Thick filaments of the myofibrils.</text>
</comment>
<comment type="domain">
    <text>The rodlike tail sequence is highly repetitive, showing cycles of a 28-residue repeat pattern composed of 4 heptapeptides, characteristic for alpha-helical coiled coils.</text>
</comment>
<comment type="domain">
    <text evidence="7">Limited proteolysis of myosin heavy chain produces 1 light meromyosin (LMM) and 1 heavy meromyosin (HMM). HMM can be further cleaved into 2 globular subfragments (S1) and 1 rod-shaped subfragment (S2).</text>
</comment>
<comment type="similarity">
    <text evidence="7">Belongs to the TRAFAC class myosin-kinesin ATPase superfamily. Myosin family.</text>
</comment>
<reference key="1">
    <citation type="journal article" date="1997" name="Gene">
        <title>Cloning, nucleotide sequence and characterization of a full-length cDNA encoding the myosin heavy chain from adult chicken pectoralis major muscle.</title>
        <authorList>
            <person name="Chao T.H."/>
            <person name="Bandman E."/>
        </authorList>
    </citation>
    <scope>NUCLEOTIDE SEQUENCE [MRNA]</scope>
    <source>
        <strain>White leghorn</strain>
        <tissue>Pectoralis muscle</tissue>
    </source>
</reference>
<reference key="2">
    <citation type="journal article" date="1991" name="J. Biochem.">
        <title>The primary structure of skeletal muscle myosin heavy chain: I. Sequence of the amino-terminal 23 kDa fragment.</title>
        <authorList>
            <person name="Hayashida M."/>
            <person name="Maita T."/>
            <person name="Matsuda G."/>
        </authorList>
    </citation>
    <scope>PROTEIN SEQUENCE OF 2-206</scope>
    <source>
        <tissue>Pectoralis muscle</tissue>
    </source>
</reference>
<reference key="3">
    <citation type="journal article" date="1991" name="J. Biochem.">
        <title>The primary structure of skeletal muscle myosin heavy chain: II. Sequence of the 50 kDa fragment of subfragment-1.</title>
        <authorList>
            <person name="Komine Y."/>
            <person name="Maita T."/>
            <person name="Matsuda G."/>
        </authorList>
    </citation>
    <scope>PROTEIN SEQUENCE OF 207-637</scope>
    <source>
        <tissue>Pectoralis muscle</tissue>
    </source>
</reference>
<reference key="4">
    <citation type="journal article" date="1991" name="J. Biochem.">
        <title>The primary structure of skeletal muscle myosin heavy chain: III. Sequence of the 22 kDa fragment and the alignment of the 23 kDa, 50 kDa, and 22 kDa fragments.</title>
        <authorList>
            <person name="Maita T."/>
            <person name="Miyanishi T."/>
            <person name="Matsuzono K."/>
            <person name="Tanioka Y."/>
            <person name="Matsuda G."/>
        </authorList>
    </citation>
    <scope>PROTEIN SEQUENCE OF 638-838</scope>
    <source>
        <tissue>Pectoralis muscle</tissue>
    </source>
</reference>
<reference key="5">
    <citation type="journal article" date="1991" name="J. Biochem.">
        <title>The primary structure of skeletal muscle myosin heavy chain: IV. Sequence of the rod, and the complete 1,938-residue sequence of the heavy chain.</title>
        <authorList>
            <person name="Maita T."/>
            <person name="Yajima E."/>
            <person name="Nagata S."/>
            <person name="Miyanishi T."/>
            <person name="Nakayama S."/>
            <person name="Matsuda G."/>
        </authorList>
    </citation>
    <scope>PROTEIN SEQUENCE OF 839-1939</scope>
    <source>
        <tissue>Pectoralis muscle</tissue>
    </source>
</reference>
<reference key="6">
    <citation type="journal article" date="1987" name="Proc. Natl. Acad. Sci. U.S.A.">
        <title>The primary structure of the myosin head.</title>
        <authorList>
            <person name="Maita T."/>
            <person name="Hayashida M."/>
            <person name="Tanioka Y."/>
            <person name="Komine Y."/>
            <person name="Matsuda G."/>
        </authorList>
    </citation>
    <scope>PRELIMINARY PROTEIN SEQUENCE OF 2-809</scope>
    <scope>ACETYLATION AT ALA-2</scope>
    <scope>CLEAVAGE OF INITIATOR METHIONINE</scope>
    <scope>METHYLATION AT LYS-36; LYS-131; LYS-552 AND HIS-756</scope>
</reference>
<reference key="7">
    <citation type="journal article" date="1989" name="Biol. Chem. Hoppe-Seyler">
        <title>Complete amino-acid sequence of subfragment-2 in adult chicken skeletal muscle myosin.</title>
        <authorList>
            <person name="Watanabe B."/>
        </authorList>
    </citation>
    <scope>PROTEIN SEQUENCE OF 843-1271</scope>
</reference>
<reference key="8">
    <citation type="journal article" date="1989" name="Biol. Chem. Hoppe-Seyler">
        <title>Amino-acid sequence of the short subfragment-2 in adult chicken skeletal muscle myosin.</title>
        <authorList>
            <person name="Watanabe B."/>
        </authorList>
    </citation>
    <scope>PROTEIN SEQUENCE OF 853-1109</scope>
</reference>
<reference key="9">
    <citation type="journal article" date="1989" name="Biol. Chem. Hoppe-Seyler">
        <title>Amino-acid sequence of the hinge region in chicken myosin subfragment-2.</title>
        <authorList>
            <person name="Watanabe B."/>
        </authorList>
    </citation>
    <scope>PROTEIN SEQUENCE OF 1146-1271</scope>
</reference>
<reference key="10">
    <citation type="journal article" date="1987" name="DNA">
        <title>Genomic clones encoding chicken myosin heavy-chain genes.</title>
        <authorList>
            <person name="Moriarity D.M."/>
            <person name="Barringer K.J."/>
            <person name="Dodgson J.B."/>
            <person name="Richter H.E."/>
            <person name="Young R.B."/>
        </authorList>
    </citation>
    <scope>NUCLEOTIDE SEQUENCE [GENOMIC DNA] OF 1858-1939</scope>
</reference>
<reference key="11">
    <citation type="journal article" date="1993" name="Science">
        <title>Three-dimensional structure of myosin subfragment-1: a molecular motor.</title>
        <authorList>
            <person name="Rayment I."/>
            <person name="Rypniewski W.R."/>
            <person name="Schmidt-Base K."/>
            <person name="Smith R."/>
            <person name="Tomchick D.R."/>
            <person name="Benning M.M."/>
            <person name="Winkelmann D.A."/>
            <person name="Wesenberg G."/>
            <person name="Holden H.M."/>
        </authorList>
    </citation>
    <scope>X-RAY CRYSTALLOGRAPHY (2.8 ANGSTROMS) OF 1-844</scope>
</reference>
<name>MYSS_CHICK</name>
<protein>
    <recommendedName>
        <fullName>Myosin heavy chain, skeletal muscle, adult</fullName>
    </recommendedName>
</protein>
<dbReference type="EMBL" id="U87231">
    <property type="protein sequence ID" value="AAB47555.1"/>
    <property type="molecule type" value="mRNA"/>
</dbReference>
<dbReference type="EMBL" id="M16557">
    <property type="protein sequence ID" value="AAA48970.1"/>
    <property type="molecule type" value="Genomic_DNA"/>
</dbReference>
<dbReference type="RefSeq" id="NP_001013415.1">
    <property type="nucleotide sequence ID" value="NM_001013397.2"/>
</dbReference>
<dbReference type="PDB" id="1M8Q">
    <property type="method" value="EM"/>
    <property type="resolution" value="70.00 A"/>
    <property type="chains" value="A/D/G/P=5-844"/>
</dbReference>
<dbReference type="PDB" id="1MVW">
    <property type="method" value="EM"/>
    <property type="resolution" value="70.00 A"/>
    <property type="chains" value="A/D/G/J/M/P=5-844"/>
</dbReference>
<dbReference type="PDB" id="1O18">
    <property type="method" value="EM"/>
    <property type="resolution" value="70.00 A"/>
    <property type="chains" value="A/D/G/J/M/P=5-844"/>
</dbReference>
<dbReference type="PDB" id="1O19">
    <property type="method" value="EM"/>
    <property type="resolution" value="70.00 A"/>
    <property type="chains" value="A/D/G/J/M/S=5-844"/>
</dbReference>
<dbReference type="PDB" id="1O1A">
    <property type="method" value="EM"/>
    <property type="resolution" value="70.00 A"/>
    <property type="chains" value="A/D/G/J/M/P=5-844"/>
</dbReference>
<dbReference type="PDB" id="1O1B">
    <property type="method" value="EM"/>
    <property type="resolution" value="70.00 A"/>
    <property type="chains" value="A/D/G/J=5-844"/>
</dbReference>
<dbReference type="PDB" id="1O1C">
    <property type="method" value="EM"/>
    <property type="resolution" value="70.00 A"/>
    <property type="chains" value="A/D/G/J/P=5-844"/>
</dbReference>
<dbReference type="PDB" id="1O1D">
    <property type="method" value="EM"/>
    <property type="resolution" value="70.00 A"/>
    <property type="chains" value="A/D/G/J/M/P=5-844"/>
</dbReference>
<dbReference type="PDB" id="1O1E">
    <property type="method" value="EM"/>
    <property type="resolution" value="70.00 A"/>
    <property type="chains" value="A/D/G/J/M/P=5-844"/>
</dbReference>
<dbReference type="PDB" id="1O1F">
    <property type="method" value="EM"/>
    <property type="resolution" value="70.00 A"/>
    <property type="chains" value="A/D/G/J=5-844"/>
</dbReference>
<dbReference type="PDB" id="1O1G">
    <property type="method" value="EM"/>
    <property type="resolution" value="70.00 A"/>
    <property type="chains" value="A/D/G/J/M/P=5-844"/>
</dbReference>
<dbReference type="PDB" id="2MYS">
    <property type="method" value="X-ray"/>
    <property type="resolution" value="2.80 A"/>
    <property type="chains" value="A=2-844"/>
</dbReference>
<dbReference type="PDB" id="2W4A">
    <property type="method" value="EM"/>
    <property type="resolution" value="35.00 A"/>
    <property type="chains" value="M=5-844"/>
</dbReference>
<dbReference type="PDB" id="2W4G">
    <property type="method" value="EM"/>
    <property type="resolution" value="35.00 A"/>
    <property type="chains" value="M=5-844"/>
</dbReference>
<dbReference type="PDB" id="2W4H">
    <property type="method" value="EM"/>
    <property type="resolution" value="35.00 A"/>
    <property type="chains" value="M=5-844"/>
</dbReference>
<dbReference type="PDBsum" id="1M8Q"/>
<dbReference type="PDBsum" id="1MVW"/>
<dbReference type="PDBsum" id="1O18"/>
<dbReference type="PDBsum" id="1O19"/>
<dbReference type="PDBsum" id="1O1A"/>
<dbReference type="PDBsum" id="1O1B"/>
<dbReference type="PDBsum" id="1O1C"/>
<dbReference type="PDBsum" id="1O1D"/>
<dbReference type="PDBsum" id="1O1E"/>
<dbReference type="PDBsum" id="1O1F"/>
<dbReference type="PDBsum" id="1O1G"/>
<dbReference type="PDBsum" id="2MYS"/>
<dbReference type="PDBsum" id="2W4A"/>
<dbReference type="PDBsum" id="2W4G"/>
<dbReference type="PDBsum" id="2W4H"/>
<dbReference type="SMR" id="P13538"/>
<dbReference type="FunCoup" id="P13538">
    <property type="interactions" value="129"/>
</dbReference>
<dbReference type="STRING" id="9031.ENSGALP00000045379"/>
<dbReference type="iPTMnet" id="P13538"/>
<dbReference type="PaxDb" id="9031-ENSGALP00000043474"/>
<dbReference type="KEGG" id="gga:427788"/>
<dbReference type="VEuPathDB" id="HostDB:geneid_427788"/>
<dbReference type="eggNOG" id="KOG0161">
    <property type="taxonomic scope" value="Eukaryota"/>
</dbReference>
<dbReference type="InParanoid" id="P13538"/>
<dbReference type="BRENDA" id="5.6.1.8">
    <property type="organism ID" value="1306"/>
</dbReference>
<dbReference type="EvolutionaryTrace" id="P13538"/>
<dbReference type="PRO" id="PR:P13538"/>
<dbReference type="Proteomes" id="UP000000539">
    <property type="component" value="Unassembled WGS sequence"/>
</dbReference>
<dbReference type="GO" id="GO:0005737">
    <property type="term" value="C:cytoplasm"/>
    <property type="evidence" value="ECO:0000318"/>
    <property type="project" value="GO_Central"/>
</dbReference>
<dbReference type="GO" id="GO:0030016">
    <property type="term" value="C:myofibril"/>
    <property type="evidence" value="ECO:0007669"/>
    <property type="project" value="UniProtKB-SubCell"/>
</dbReference>
<dbReference type="GO" id="GO:0032982">
    <property type="term" value="C:myosin filament"/>
    <property type="evidence" value="ECO:0000318"/>
    <property type="project" value="GO_Central"/>
</dbReference>
<dbReference type="GO" id="GO:0016460">
    <property type="term" value="C:myosin II complex"/>
    <property type="evidence" value="ECO:0000318"/>
    <property type="project" value="GO_Central"/>
</dbReference>
<dbReference type="GO" id="GO:0051015">
    <property type="term" value="F:actin filament binding"/>
    <property type="evidence" value="ECO:0000318"/>
    <property type="project" value="GO_Central"/>
</dbReference>
<dbReference type="GO" id="GO:0005524">
    <property type="term" value="F:ATP binding"/>
    <property type="evidence" value="ECO:0007669"/>
    <property type="project" value="UniProtKB-KW"/>
</dbReference>
<dbReference type="GO" id="GO:0005516">
    <property type="term" value="F:calmodulin binding"/>
    <property type="evidence" value="ECO:0007669"/>
    <property type="project" value="UniProtKB-KW"/>
</dbReference>
<dbReference type="GO" id="GO:0000146">
    <property type="term" value="F:microfilament motor activity"/>
    <property type="evidence" value="ECO:0000318"/>
    <property type="project" value="GO_Central"/>
</dbReference>
<dbReference type="GO" id="GO:0006936">
    <property type="term" value="P:muscle contraction"/>
    <property type="evidence" value="ECO:0000318"/>
    <property type="project" value="GO_Central"/>
</dbReference>
<dbReference type="CDD" id="cd01377">
    <property type="entry name" value="MYSc_class_II"/>
    <property type="match status" value="1"/>
</dbReference>
<dbReference type="FunFam" id="1.10.10.820:FF:000001">
    <property type="entry name" value="Myosin heavy chain"/>
    <property type="match status" value="1"/>
</dbReference>
<dbReference type="FunFam" id="1.20.5.340:FF:000002">
    <property type="entry name" value="Myosin heavy chain"/>
    <property type="match status" value="1"/>
</dbReference>
<dbReference type="FunFam" id="1.20.5.340:FF:000003">
    <property type="entry name" value="Myosin heavy chain"/>
    <property type="match status" value="1"/>
</dbReference>
<dbReference type="FunFam" id="1.20.5.340:FF:000004">
    <property type="entry name" value="Myosin heavy chain"/>
    <property type="match status" value="1"/>
</dbReference>
<dbReference type="FunFam" id="1.20.5.340:FF:000006">
    <property type="entry name" value="Myosin heavy chain"/>
    <property type="match status" value="1"/>
</dbReference>
<dbReference type="FunFam" id="1.20.5.340:FF:000013">
    <property type="entry name" value="Myosin heavy chain"/>
    <property type="match status" value="1"/>
</dbReference>
<dbReference type="FunFam" id="1.20.5.370:FF:000001">
    <property type="entry name" value="Myosin heavy chain"/>
    <property type="match status" value="1"/>
</dbReference>
<dbReference type="FunFam" id="1.20.5.370:FF:000002">
    <property type="entry name" value="Myosin heavy chain"/>
    <property type="match status" value="1"/>
</dbReference>
<dbReference type="FunFam" id="1.20.5.370:FF:000003">
    <property type="entry name" value="Myosin heavy chain"/>
    <property type="match status" value="1"/>
</dbReference>
<dbReference type="FunFam" id="1.20.5.370:FF:000007">
    <property type="entry name" value="Myosin heavy chain"/>
    <property type="match status" value="1"/>
</dbReference>
<dbReference type="FunFam" id="1.20.5.370:FF:000008">
    <property type="entry name" value="Myosin heavy chain"/>
    <property type="match status" value="1"/>
</dbReference>
<dbReference type="FunFam" id="1.20.5.4820:FF:000001">
    <property type="entry name" value="Myosin heavy chain"/>
    <property type="match status" value="1"/>
</dbReference>
<dbReference type="FunFam" id="1.20.58.530:FF:000001">
    <property type="entry name" value="Myosin heavy chain"/>
    <property type="match status" value="1"/>
</dbReference>
<dbReference type="FunFam" id="2.30.30.360:FF:000001">
    <property type="entry name" value="Myosin heavy chain"/>
    <property type="match status" value="1"/>
</dbReference>
<dbReference type="FunFam" id="3.40.850.10:FF:000024">
    <property type="entry name" value="Myosin heavy chain, isoform J"/>
    <property type="match status" value="1"/>
</dbReference>
<dbReference type="FunFam" id="1.20.120.720:FF:000001">
    <property type="entry name" value="Myosin heavy chain, muscle"/>
    <property type="match status" value="1"/>
</dbReference>
<dbReference type="Gene3D" id="1.10.10.820">
    <property type="match status" value="1"/>
</dbReference>
<dbReference type="Gene3D" id="1.20.5.340">
    <property type="match status" value="4"/>
</dbReference>
<dbReference type="Gene3D" id="1.20.5.370">
    <property type="match status" value="4"/>
</dbReference>
<dbReference type="Gene3D" id="1.20.5.4820">
    <property type="match status" value="1"/>
</dbReference>
<dbReference type="Gene3D" id="1.20.58.530">
    <property type="match status" value="1"/>
</dbReference>
<dbReference type="Gene3D" id="6.10.250.2420">
    <property type="match status" value="1"/>
</dbReference>
<dbReference type="Gene3D" id="3.40.850.10">
    <property type="entry name" value="Kinesin motor domain"/>
    <property type="match status" value="1"/>
</dbReference>
<dbReference type="Gene3D" id="2.30.30.360">
    <property type="entry name" value="Myosin S1 fragment, N-terminal"/>
    <property type="match status" value="1"/>
</dbReference>
<dbReference type="Gene3D" id="1.20.120.720">
    <property type="entry name" value="Myosin VI head, motor domain, U50 subdomain"/>
    <property type="match status" value="1"/>
</dbReference>
<dbReference type="InterPro" id="IPR000048">
    <property type="entry name" value="IQ_motif_EF-hand-BS"/>
</dbReference>
<dbReference type="InterPro" id="IPR036961">
    <property type="entry name" value="Kinesin_motor_dom_sf"/>
</dbReference>
<dbReference type="InterPro" id="IPR001609">
    <property type="entry name" value="Myosin_head_motor_dom-like"/>
</dbReference>
<dbReference type="InterPro" id="IPR004009">
    <property type="entry name" value="Myosin_N"/>
</dbReference>
<dbReference type="InterPro" id="IPR008989">
    <property type="entry name" value="Myosin_S1_N"/>
</dbReference>
<dbReference type="InterPro" id="IPR002928">
    <property type="entry name" value="Myosin_tail"/>
</dbReference>
<dbReference type="InterPro" id="IPR027417">
    <property type="entry name" value="P-loop_NTPase"/>
</dbReference>
<dbReference type="InterPro" id="IPR014751">
    <property type="entry name" value="XRCC4-like_C"/>
</dbReference>
<dbReference type="PANTHER" id="PTHR45615">
    <property type="entry name" value="MYOSIN HEAVY CHAIN, NON-MUSCLE"/>
    <property type="match status" value="1"/>
</dbReference>
<dbReference type="PANTHER" id="PTHR45615:SF79">
    <property type="entry name" value="MYOSIN-4"/>
    <property type="match status" value="1"/>
</dbReference>
<dbReference type="Pfam" id="PF00063">
    <property type="entry name" value="Myosin_head"/>
    <property type="match status" value="1"/>
</dbReference>
<dbReference type="Pfam" id="PF02736">
    <property type="entry name" value="Myosin_N"/>
    <property type="match status" value="1"/>
</dbReference>
<dbReference type="Pfam" id="PF01576">
    <property type="entry name" value="Myosin_tail_1"/>
    <property type="match status" value="1"/>
</dbReference>
<dbReference type="PRINTS" id="PR00193">
    <property type="entry name" value="MYOSINHEAVY"/>
</dbReference>
<dbReference type="SMART" id="SM00015">
    <property type="entry name" value="IQ"/>
    <property type="match status" value="1"/>
</dbReference>
<dbReference type="SMART" id="SM00242">
    <property type="entry name" value="MYSc"/>
    <property type="match status" value="1"/>
</dbReference>
<dbReference type="SUPFAM" id="SSF90257">
    <property type="entry name" value="Myosin rod fragments"/>
    <property type="match status" value="5"/>
</dbReference>
<dbReference type="SUPFAM" id="SSF52540">
    <property type="entry name" value="P-loop containing nucleoside triphosphate hydrolases"/>
    <property type="match status" value="1"/>
</dbReference>
<dbReference type="PROSITE" id="PS50096">
    <property type="entry name" value="IQ"/>
    <property type="match status" value="1"/>
</dbReference>
<dbReference type="PROSITE" id="PS51456">
    <property type="entry name" value="MYOSIN_MOTOR"/>
    <property type="match status" value="1"/>
</dbReference>
<dbReference type="PROSITE" id="PS51844">
    <property type="entry name" value="SH3_LIKE"/>
    <property type="match status" value="1"/>
</dbReference>
<feature type="initiator methionine" description="Removed" evidence="5 6">
    <location>
        <position position="1"/>
    </location>
</feature>
<feature type="chain" id="PRO_0000123434" description="Myosin heavy chain, skeletal muscle, adult">
    <location>
        <begin position="2"/>
        <end position="1939"/>
    </location>
</feature>
<feature type="domain" description="Myosin N-terminal SH3-like" evidence="4">
    <location>
        <begin position="34"/>
        <end position="83"/>
    </location>
</feature>
<feature type="domain" description="Myosin motor" evidence="3">
    <location>
        <begin position="87"/>
        <end position="781"/>
    </location>
</feature>
<feature type="domain" description="IQ" evidence="2">
    <location>
        <begin position="784"/>
        <end position="813"/>
    </location>
</feature>
<feature type="region of interest" description="Actin-binding">
    <location>
        <begin position="658"/>
        <end position="680"/>
    </location>
</feature>
<feature type="region of interest" description="Actin-binding">
    <location>
        <begin position="760"/>
        <end position="774"/>
    </location>
</feature>
<feature type="region of interest" description="Hinge">
    <location>
        <begin position="839"/>
        <end position="841"/>
    </location>
</feature>
<feature type="coiled-coil region" evidence="1">
    <location>
        <begin position="842"/>
        <end position="1939"/>
    </location>
</feature>
<feature type="binding site" evidence="1">
    <location>
        <begin position="180"/>
        <end position="187"/>
    </location>
    <ligand>
        <name>ATP</name>
        <dbReference type="ChEBI" id="CHEBI:30616"/>
    </ligand>
</feature>
<feature type="modified residue" description="N-acetylalanine" evidence="6">
    <location>
        <position position="2"/>
    </location>
</feature>
<feature type="modified residue" description="N6-methyllysine" evidence="6">
    <location>
        <position position="36"/>
    </location>
</feature>
<feature type="modified residue" description="N6,N6,N6-trimethyllysine" evidence="6">
    <location>
        <position position="131"/>
    </location>
</feature>
<feature type="modified residue" description="N6,N6,N6-trimethyllysine" evidence="6">
    <location>
        <position position="552"/>
    </location>
</feature>
<feature type="modified residue" description="Pros-methylhistidine" evidence="6">
    <location>
        <position position="756"/>
    </location>
</feature>
<feature type="sequence conflict" description="In Ref. 7; AA sequence and 8; AA sequence." evidence="7" ref="7 8">
    <original>C</original>
    <variation>Q</variation>
    <location>
        <position position="908"/>
    </location>
</feature>
<feature type="sequence conflict" description="In Ref. 1; AAB47555." evidence="7" ref="1">
    <original>L</original>
    <variation>F</variation>
    <location>
        <position position="981"/>
    </location>
</feature>
<feature type="sequence conflict" description="In Ref. 5; AA sequence." evidence="7" ref="5">
    <original>E</original>
    <variation>D</variation>
    <location>
        <position position="1344"/>
    </location>
</feature>
<feature type="sequence conflict" description="In Ref. 5; AA sequence." evidence="7" ref="5">
    <original>S</original>
    <variation>A</variation>
    <location>
        <position position="1546"/>
    </location>
</feature>
<feature type="sequence conflict" description="In Ref. 5; AA sequence." evidence="7" ref="5">
    <original>HV</original>
    <variation>QL</variation>
    <location>
        <begin position="1797"/>
        <end position="1798"/>
    </location>
</feature>
<feature type="sequence conflict" description="In Ref. 5; AA sequence." evidence="7" ref="5">
    <original>S</original>
    <variation>A</variation>
    <location>
        <position position="1831"/>
    </location>
</feature>
<feature type="sequence conflict" description="In Ref. 10; AAA48970." evidence="7" ref="10">
    <original>I</original>
    <variation>V</variation>
    <location>
        <position position="1864"/>
    </location>
</feature>
<feature type="sequence conflict" description="In Ref. 10; AAA48970." evidence="7" ref="10">
    <original>IHG</original>
    <variation>FH</variation>
    <location>
        <begin position="1930"/>
        <end position="1932"/>
    </location>
</feature>
<feature type="helix" evidence="8">
    <location>
        <begin position="15"/>
        <end position="18"/>
    </location>
</feature>
<feature type="turn" evidence="8">
    <location>
        <begin position="22"/>
        <end position="25"/>
    </location>
</feature>
<feature type="helix" evidence="8">
    <location>
        <begin position="26"/>
        <end position="29"/>
    </location>
</feature>
<feature type="strand" evidence="8">
    <location>
        <begin position="40"/>
        <end position="42"/>
    </location>
</feature>
<feature type="strand" evidence="8">
    <location>
        <begin position="44"/>
        <end position="49"/>
    </location>
</feature>
<feature type="strand" evidence="8">
    <location>
        <begin position="51"/>
        <end position="55"/>
    </location>
</feature>
<feature type="strand" evidence="8">
    <location>
        <begin position="62"/>
        <end position="65"/>
    </location>
</feature>
<feature type="helix" evidence="8">
    <location>
        <begin position="75"/>
        <end position="77"/>
    </location>
</feature>
<feature type="helix" evidence="8">
    <location>
        <begin position="92"/>
        <end position="94"/>
    </location>
</feature>
<feature type="helix" evidence="8">
    <location>
        <begin position="100"/>
        <end position="107"/>
    </location>
</feature>
<feature type="turn" evidence="8">
    <location>
        <begin position="111"/>
        <end position="114"/>
    </location>
</feature>
<feature type="strand" evidence="8">
    <location>
        <begin position="117"/>
        <end position="119"/>
    </location>
</feature>
<feature type="strand" evidence="8">
    <location>
        <begin position="124"/>
        <end position="127"/>
    </location>
</feature>
<feature type="helix" evidence="8">
    <location>
        <begin position="134"/>
        <end position="136"/>
    </location>
</feature>
<feature type="turn" evidence="8">
    <location>
        <begin position="141"/>
        <end position="146"/>
    </location>
</feature>
<feature type="helix" evidence="8">
    <location>
        <begin position="156"/>
        <end position="170"/>
    </location>
</feature>
<feature type="strand" evidence="8">
    <location>
        <begin position="174"/>
        <end position="180"/>
    </location>
</feature>
<feature type="helix" evidence="8">
    <location>
        <begin position="186"/>
        <end position="190"/>
    </location>
</feature>
<feature type="helix" evidence="8">
    <location>
        <begin position="193"/>
        <end position="200"/>
    </location>
</feature>
<feature type="helix" evidence="8">
    <location>
        <begin position="219"/>
        <end position="234"/>
    </location>
</feature>
<feature type="strand" evidence="8">
    <location>
        <begin position="242"/>
        <end position="245"/>
    </location>
</feature>
<feature type="strand" evidence="8">
    <location>
        <begin position="247"/>
        <end position="255"/>
    </location>
</feature>
<feature type="strand" evidence="8">
    <location>
        <begin position="257"/>
        <end position="263"/>
    </location>
</feature>
<feature type="turn" evidence="8">
    <location>
        <begin position="275"/>
        <end position="277"/>
    </location>
</feature>
<feature type="helix" evidence="8">
    <location>
        <begin position="287"/>
        <end position="292"/>
    </location>
</feature>
<feature type="helix" evidence="8">
    <location>
        <begin position="299"/>
        <end position="304"/>
    </location>
</feature>
<feature type="helix" evidence="8">
    <location>
        <begin position="310"/>
        <end position="312"/>
    </location>
</feature>
<feature type="helix" evidence="8">
    <location>
        <begin position="314"/>
        <end position="316"/>
    </location>
</feature>
<feature type="helix" evidence="8">
    <location>
        <begin position="328"/>
        <end position="341"/>
    </location>
</feature>
<feature type="turn" evidence="8">
    <location>
        <begin position="346"/>
        <end position="348"/>
    </location>
</feature>
<feature type="turn" evidence="8">
    <location>
        <begin position="351"/>
        <end position="353"/>
    </location>
</feature>
<feature type="helix" evidence="8">
    <location>
        <begin position="358"/>
        <end position="362"/>
    </location>
</feature>
<feature type="strand" evidence="8">
    <location>
        <begin position="367"/>
        <end position="370"/>
    </location>
</feature>
<feature type="strand" evidence="8">
    <location>
        <begin position="375"/>
        <end position="379"/>
    </location>
</feature>
<feature type="turn" evidence="8">
    <location>
        <begin position="383"/>
        <end position="385"/>
    </location>
</feature>
<feature type="helix" evidence="8">
    <location>
        <begin position="388"/>
        <end position="391"/>
    </location>
</feature>
<feature type="helix" evidence="8">
    <location>
        <begin position="395"/>
        <end position="403"/>
    </location>
</feature>
<feature type="strand" evidence="8">
    <location>
        <begin position="410"/>
        <end position="412"/>
    </location>
</feature>
<feature type="helix" evidence="8">
    <location>
        <begin position="420"/>
        <end position="431"/>
    </location>
</feature>
<feature type="turn" evidence="8">
    <location>
        <begin position="434"/>
        <end position="436"/>
    </location>
</feature>
<feature type="helix" evidence="8">
    <location>
        <begin position="439"/>
        <end position="449"/>
    </location>
</feature>
<feature type="strand" evidence="8">
    <location>
        <begin position="458"/>
        <end position="466"/>
    </location>
</feature>
<feature type="strand" evidence="8">
    <location>
        <begin position="472"/>
        <end position="474"/>
    </location>
</feature>
<feature type="helix" evidence="8">
    <location>
        <begin position="476"/>
        <end position="486"/>
    </location>
</feature>
<feature type="helix" evidence="8">
    <location>
        <begin position="489"/>
        <end position="503"/>
    </location>
</feature>
<feature type="helix" evidence="8">
    <location>
        <begin position="518"/>
        <end position="528"/>
    </location>
</feature>
<feature type="helix" evidence="8">
    <location>
        <begin position="533"/>
        <end position="540"/>
    </location>
</feature>
<feature type="helix" evidence="8">
    <location>
        <begin position="548"/>
        <end position="551"/>
    </location>
</feature>
<feature type="helix" evidence="8">
    <location>
        <begin position="556"/>
        <end position="559"/>
    </location>
</feature>
<feature type="strand" evidence="8">
    <location>
        <begin position="563"/>
        <end position="567"/>
    </location>
</feature>
<feature type="strand" evidence="8">
    <location>
        <begin position="579"/>
        <end position="583"/>
    </location>
</feature>
<feature type="strand" evidence="8">
    <location>
        <begin position="588"/>
        <end position="591"/>
    </location>
</feature>
<feature type="turn" evidence="8">
    <location>
        <begin position="596"/>
        <end position="598"/>
    </location>
</feature>
<feature type="helix" evidence="8">
    <location>
        <begin position="606"/>
        <end position="613"/>
    </location>
</feature>
<feature type="helix" evidence="8">
    <location>
        <begin position="620"/>
        <end position="623"/>
    </location>
</feature>
<feature type="helix" evidence="8">
    <location>
        <begin position="651"/>
        <end position="659"/>
    </location>
</feature>
<feature type="helix" evidence="8">
    <location>
        <begin position="662"/>
        <end position="666"/>
    </location>
</feature>
<feature type="strand" evidence="8">
    <location>
        <begin position="668"/>
        <end position="676"/>
    </location>
</feature>
<feature type="helix" evidence="8">
    <location>
        <begin position="689"/>
        <end position="699"/>
    </location>
</feature>
<feature type="helix" evidence="8">
    <location>
        <begin position="701"/>
        <end position="708"/>
    </location>
</feature>
<feature type="helix" evidence="8">
    <location>
        <begin position="718"/>
        <end position="725"/>
    </location>
</feature>
<feature type="helix" evidence="8">
    <location>
        <begin position="726"/>
        <end position="728"/>
    </location>
</feature>
<feature type="turn" evidence="8">
    <location>
        <begin position="729"/>
        <end position="731"/>
    </location>
</feature>
<feature type="helix" evidence="8">
    <location>
        <begin position="743"/>
        <end position="748"/>
    </location>
</feature>
<feature type="strand" evidence="8">
    <location>
        <begin position="751"/>
        <end position="753"/>
    </location>
</feature>
<feature type="strand" evidence="8">
    <location>
        <begin position="756"/>
        <end position="762"/>
    </location>
</feature>
<feature type="strand" evidence="8">
    <location>
        <begin position="765"/>
        <end position="768"/>
    </location>
</feature>
<feature type="helix" evidence="8">
    <location>
        <begin position="772"/>
        <end position="782"/>
    </location>
</feature>
<feature type="helix" evidence="8">
    <location>
        <begin position="785"/>
        <end position="827"/>
    </location>
</feature>
<feature type="turn" evidence="8">
    <location>
        <begin position="831"/>
        <end position="833"/>
    </location>
</feature>
<sequence length="1939" mass="223145">MASPDAEMAAFGEAAPYLRKSEKERIEAQNKPFDAKSSVFVVHPKESFVKGTIQSKEGGKVTVKTEGGETLTVKEDQVFSMNPPKYDKIEDMAMMTHLHEPAVLYNLKERYAAWMIYTYSGLFCVTVNPYKWLPVYNPEVVLAYRGKKRQEAPPHIFSISDNAYQFMLTDRENQSILITGESGAGKTVNTKRVIQYFATIAASGEKKKEEQSGKMQGTLEDQIISANPLLEAFGNAKTVRNDNSSRFGKFIRIHFGATGKLASADIETYLLEKSRVTFQLPAERSYHIFYQIMSNKKPELIDMLLITTNPYDYHYVSQGEITVPSIDDQEELMATDSAIDILGFSADEKTAIYKLTGAVMHYGNLKFKQKQREEQAEPDGTEVADKAAYLMGLNSAELLKALCYPRVKVGNEFVTKGQTVSQVHNSVGALAKAVYEKMFLWMVIRINQQLDTKQPRQYFIGVLDIAGFEIFDFNSFEQLCINFTNEKLQQFFNHHMFVLEQEEYKKEGIEWEFIDFGMDLAACIELIEKPMGIFSILEEECMFPKATDTSFKNKLYDQHLGKSNNFQKPKPAKGKAEAHFSLVHYAGTVDYNISGWLEKNKDPLNETVIGLYQKSSVKTLALLFATYGGEAEGGGGKKGGKKKGSSFQTVSALFRENLNKLMANLRSTHPHFVRCIIPNETKTPGAMEHELVLHQLRCNGVLEGIRICRKGFPSRVLYADFKQRYRVLNASAIPEGQFMDSKKASEKLLGSIDVDHTQYRFGHTKVFFKAGLLGLLEEMRDDKLAEIITRTQARCRGFLMRVEYRRMVERRESIFCIQYNVRSFMNVKHWPWMKLFFKIKPLLKSAESEKEMANMKEEFEKTKEELAKSEAKRKELEEKMVVLLQEKNDLQLQVQAEADSLADAEERCDQLIKTKIQLEAKIKEVTERAEDEEEINAELTAKKRKLEDECSELKKDIDDLELTLAKVEKEKHATENKVKNLTEEMAVLDETIAKLTKEKKALQEAHQQTLDDLQVEEDKVNTLTKAKTKLEQQVDDLEGSLEQEKKLRMDLERAKRKLEGDLKLAHDSIMDLENDKQQLDEKLKKKDFEISQIQSKIEDEQALGMQLQKKIKELQARIEELEEEIEAERTSRAKAEKHRADLSRELEEISERLEEAGGATAAQIEMNKKREAEFQKMRRDLEEATLQHEATAAALRKKHADSTAELGEQIDNLQRVKQKLEKEKSELKMEIDDLASNMESVSKAKANLEKMCRTLEDQLSEIKTKEEQNQRMINDLNTQRARLQTETGEYSRQAEEKDALISQLSRGKQGFTQQIEELKRHLEEEIKAKNALAHALQSARHDCELLREQYEEEQEAKGELQRALSKANSEVAQWRTKYETDAIQRTEELEEAKKKLAQRLQDAEEHVEAVNAKCASLEKTKQRLQNEVEDLMVDVERSNAACAALDKKQKNFDKILAEWKQKYEETQTELEASQKESRSLSTELFKMKNAYEESLDHLETLKRENKNLQQEIADLTEQIAEGGKAVHELEKVKKHVEQEKSELQASLEEAEASLEHEEGKILRLQLELNQIKSEIDRKIAEKDEEIDQLKRNHLRIVESMQSTLDAEIRSRNEALRLKKKMEGDLNEMEIQLSHANRMAAEAQKNLRNTQGTLKDTQIHLDDALRTQEDLKEQVAMVERRANLLQAEVEELRGALEQTERSRKVAEQELLDATERVQLLHTQNTSLINTKKKLETDIVQIQSEMEDTIQEARNAEEKAKKAITDAAMMAEELKKEQDTSAHLERMKKNMDQTVKDLHVRLDEAEQLALKGGKKQLQKLEARVRELEGEVDSEQKRSAEAVKGVRKYERRVKELTYQCEEDRKNILRLQDLVDKLQMKVKSYKRQAEEAEELSNVNLSKFRKIQHELEEAEERADIAESQVNKLRVKSREIHGKKIEEEE</sequence>
<organism>
    <name type="scientific">Gallus gallus</name>
    <name type="common">Chicken</name>
    <dbReference type="NCBI Taxonomy" id="9031"/>
    <lineage>
        <taxon>Eukaryota</taxon>
        <taxon>Metazoa</taxon>
        <taxon>Chordata</taxon>
        <taxon>Craniata</taxon>
        <taxon>Vertebrata</taxon>
        <taxon>Euteleostomi</taxon>
        <taxon>Archelosauria</taxon>
        <taxon>Archosauria</taxon>
        <taxon>Dinosauria</taxon>
        <taxon>Saurischia</taxon>
        <taxon>Theropoda</taxon>
        <taxon>Coelurosauria</taxon>
        <taxon>Aves</taxon>
        <taxon>Neognathae</taxon>
        <taxon>Galloanserae</taxon>
        <taxon>Galliformes</taxon>
        <taxon>Phasianidae</taxon>
        <taxon>Phasianinae</taxon>
        <taxon>Gallus</taxon>
    </lineage>
</organism>
<proteinExistence type="evidence at protein level"/>
<keyword id="KW-0002">3D-structure</keyword>
<keyword id="KW-0007">Acetylation</keyword>
<keyword id="KW-0009">Actin-binding</keyword>
<keyword id="KW-0067">ATP-binding</keyword>
<keyword id="KW-0112">Calmodulin-binding</keyword>
<keyword id="KW-0175">Coiled coil</keyword>
<keyword id="KW-0963">Cytoplasm</keyword>
<keyword id="KW-0903">Direct protein sequencing</keyword>
<keyword id="KW-0488">Methylation</keyword>
<keyword id="KW-0505">Motor protein</keyword>
<keyword id="KW-0514">Muscle protein</keyword>
<keyword id="KW-0518">Myosin</keyword>
<keyword id="KW-0547">Nucleotide-binding</keyword>
<keyword id="KW-0597">Phosphoprotein</keyword>
<keyword id="KW-1185">Reference proteome</keyword>
<keyword id="KW-0787">Thick filament</keyword>
<evidence type="ECO:0000255" key="1"/>
<evidence type="ECO:0000255" key="2">
    <source>
        <dbReference type="PROSITE-ProRule" id="PRU00116"/>
    </source>
</evidence>
<evidence type="ECO:0000255" key="3">
    <source>
        <dbReference type="PROSITE-ProRule" id="PRU00782"/>
    </source>
</evidence>
<evidence type="ECO:0000255" key="4">
    <source>
        <dbReference type="PROSITE-ProRule" id="PRU01190"/>
    </source>
</evidence>
<evidence type="ECO:0000269" key="5">
    <source>
    </source>
</evidence>
<evidence type="ECO:0000269" key="6">
    <source>
    </source>
</evidence>
<evidence type="ECO:0000305" key="7"/>
<evidence type="ECO:0007829" key="8">
    <source>
        <dbReference type="PDB" id="2MYS"/>
    </source>
</evidence>
<accession>P13538</accession>
<accession>O13228</accession>